<comment type="function">
    <text evidence="1">May participate in the regulatory network that controls the expression of MmpL lipid transporters.</text>
</comment>
<comment type="subunit">
    <text evidence="1">Homodimer.</text>
</comment>
<comment type="subcellular location">
    <subcellularLocation>
        <location evidence="3">Cytoplasm</location>
    </subcellularLocation>
</comment>
<comment type="domain">
    <text evidence="1">Contains an N-terminal DNA-binding domain and a C-terminal ligand-binding regulatory domain.</text>
</comment>
<keyword id="KW-0963">Cytoplasm</keyword>
<keyword id="KW-0238">DNA-binding</keyword>
<keyword id="KW-1185">Reference proteome</keyword>
<keyword id="KW-0804">Transcription</keyword>
<keyword id="KW-0805">Transcription regulation</keyword>
<organism>
    <name type="scientific">Mycobacterium tuberculosis (strain CDC 1551 / Oshkosh)</name>
    <dbReference type="NCBI Taxonomy" id="83331"/>
    <lineage>
        <taxon>Bacteria</taxon>
        <taxon>Bacillati</taxon>
        <taxon>Actinomycetota</taxon>
        <taxon>Actinomycetes</taxon>
        <taxon>Mycobacteriales</taxon>
        <taxon>Mycobacteriaceae</taxon>
        <taxon>Mycobacterium</taxon>
        <taxon>Mycobacterium tuberculosis complex</taxon>
    </lineage>
</organism>
<accession>P9WMC8</accession>
<accession>L0T7S4</accession>
<accession>P67438</accession>
<accession>Q50617</accession>
<proteinExistence type="inferred from homology"/>
<protein>
    <recommendedName>
        <fullName evidence="3">HTH-type transcriptional regulator MT1864</fullName>
    </recommendedName>
</protein>
<reference key="1">
    <citation type="journal article" date="2002" name="J. Bacteriol.">
        <title>Whole-genome comparison of Mycobacterium tuberculosis clinical and laboratory strains.</title>
        <authorList>
            <person name="Fleischmann R.D."/>
            <person name="Alland D."/>
            <person name="Eisen J.A."/>
            <person name="Carpenter L."/>
            <person name="White O."/>
            <person name="Peterson J.D."/>
            <person name="DeBoy R.T."/>
            <person name="Dodson R.J."/>
            <person name="Gwinn M.L."/>
            <person name="Haft D.H."/>
            <person name="Hickey E.K."/>
            <person name="Kolonay J.F."/>
            <person name="Nelson W.C."/>
            <person name="Umayam L.A."/>
            <person name="Ermolaeva M.D."/>
            <person name="Salzberg S.L."/>
            <person name="Delcher A."/>
            <person name="Utterback T.R."/>
            <person name="Weidman J.F."/>
            <person name="Khouri H.M."/>
            <person name="Gill J."/>
            <person name="Mikula A."/>
            <person name="Bishai W."/>
            <person name="Jacobs W.R. Jr."/>
            <person name="Venter J.C."/>
            <person name="Fraser C.M."/>
        </authorList>
    </citation>
    <scope>NUCLEOTIDE SEQUENCE [LARGE SCALE GENOMIC DNA]</scope>
    <source>
        <strain>CDC 1551 / Oshkosh</strain>
    </source>
</reference>
<gene>
    <name type="ordered locus">MT1864</name>
</gene>
<sequence length="234" mass="25353">MCQTCRVGKRRDAREQIEAKIVELGRRQLLDHGAAGLSLRAIARNLGMVSSAVYRYVSSRDELLTLLLVDAYSDLADTVDRARDDTVADSWSDDVIAIARAVRGWAVTNPARWALLYGSPVPGYHAPPDRTAGVATRVVGAFFDAIAAGIATGDIRLTDDVAPQPMSSDFEKIRQEFGFPGDDRVVTKCFLLWAGVVGAISLEVFGQYGADMLTDPGVVFDAQTRLLVAVLAEH</sequence>
<evidence type="ECO:0000250" key="1">
    <source>
        <dbReference type="UniProtKB" id="P9WMC9"/>
    </source>
</evidence>
<evidence type="ECO:0000255" key="2">
    <source>
        <dbReference type="PROSITE-ProRule" id="PRU00335"/>
    </source>
</evidence>
<evidence type="ECO:0000305" key="3"/>
<feature type="chain" id="PRO_0000427326" description="HTH-type transcriptional regulator MT1864">
    <location>
        <begin position="1"/>
        <end position="234"/>
    </location>
</feature>
<feature type="domain" description="HTH tetR-type" evidence="2">
    <location>
        <begin position="15"/>
        <end position="75"/>
    </location>
</feature>
<feature type="DNA-binding region" description="H-T-H motif" evidence="2">
    <location>
        <begin position="38"/>
        <end position="57"/>
    </location>
</feature>
<dbReference type="EMBL" id="AE000516">
    <property type="protein sequence ID" value="AAK46137.1"/>
    <property type="molecule type" value="Genomic_DNA"/>
</dbReference>
<dbReference type="PIR" id="A70720">
    <property type="entry name" value="A70720"/>
</dbReference>
<dbReference type="SMR" id="P9WMC8"/>
<dbReference type="KEGG" id="mtc:MT1864"/>
<dbReference type="PATRIC" id="fig|83331.31.peg.2007"/>
<dbReference type="HOGENOM" id="CLU_069356_9_0_11"/>
<dbReference type="Proteomes" id="UP000001020">
    <property type="component" value="Chromosome"/>
</dbReference>
<dbReference type="GO" id="GO:0005737">
    <property type="term" value="C:cytoplasm"/>
    <property type="evidence" value="ECO:0007669"/>
    <property type="project" value="UniProtKB-SubCell"/>
</dbReference>
<dbReference type="GO" id="GO:0003700">
    <property type="term" value="F:DNA-binding transcription factor activity"/>
    <property type="evidence" value="ECO:0007669"/>
    <property type="project" value="TreeGrafter"/>
</dbReference>
<dbReference type="GO" id="GO:0000976">
    <property type="term" value="F:transcription cis-regulatory region binding"/>
    <property type="evidence" value="ECO:0007669"/>
    <property type="project" value="TreeGrafter"/>
</dbReference>
<dbReference type="Gene3D" id="1.10.357.10">
    <property type="entry name" value="Tetracycline Repressor, domain 2"/>
    <property type="match status" value="1"/>
</dbReference>
<dbReference type="InterPro" id="IPR009057">
    <property type="entry name" value="Homeodomain-like_sf"/>
</dbReference>
<dbReference type="InterPro" id="IPR050109">
    <property type="entry name" value="HTH-type_TetR-like_transc_reg"/>
</dbReference>
<dbReference type="InterPro" id="IPR001647">
    <property type="entry name" value="HTH_TetR"/>
</dbReference>
<dbReference type="InterPro" id="IPR025996">
    <property type="entry name" value="MT1864/Rv1816-like_C"/>
</dbReference>
<dbReference type="InterPro" id="IPR036271">
    <property type="entry name" value="Tet_transcr_reg_TetR-rel_C_sf"/>
</dbReference>
<dbReference type="PANTHER" id="PTHR30055">
    <property type="entry name" value="HTH-TYPE TRANSCRIPTIONAL REGULATOR RUTR"/>
    <property type="match status" value="1"/>
</dbReference>
<dbReference type="PANTHER" id="PTHR30055:SF243">
    <property type="entry name" value="HTH-TYPE TRANSCRIPTIONAL REGULATOR RV1816"/>
    <property type="match status" value="1"/>
</dbReference>
<dbReference type="Pfam" id="PF13305">
    <property type="entry name" value="TetR_C_33"/>
    <property type="match status" value="1"/>
</dbReference>
<dbReference type="Pfam" id="PF00440">
    <property type="entry name" value="TetR_N"/>
    <property type="match status" value="1"/>
</dbReference>
<dbReference type="SUPFAM" id="SSF46689">
    <property type="entry name" value="Homeodomain-like"/>
    <property type="match status" value="1"/>
</dbReference>
<dbReference type="SUPFAM" id="SSF48498">
    <property type="entry name" value="Tetracyclin repressor-like, C-terminal domain"/>
    <property type="match status" value="1"/>
</dbReference>
<dbReference type="PROSITE" id="PS50977">
    <property type="entry name" value="HTH_TETR_2"/>
    <property type="match status" value="1"/>
</dbReference>
<name>Y1816_MYCTO</name>